<name>Y294_PASMU</name>
<accession>Q9CNX7</accession>
<dbReference type="EMBL" id="AE004439">
    <property type="protein sequence ID" value="AAK02378.1"/>
    <property type="molecule type" value="Genomic_DNA"/>
</dbReference>
<dbReference type="RefSeq" id="WP_010906569.1">
    <property type="nucleotide sequence ID" value="NC_002663.1"/>
</dbReference>
<dbReference type="STRING" id="272843.PM0294"/>
<dbReference type="EnsemblBacteria" id="AAK02378">
    <property type="protein sequence ID" value="AAK02378"/>
    <property type="gene ID" value="PM0294"/>
</dbReference>
<dbReference type="KEGG" id="pmu:PM0294"/>
<dbReference type="PATRIC" id="fig|272843.6.peg.304"/>
<dbReference type="HOGENOM" id="CLU_640533_0_0_6"/>
<dbReference type="OrthoDB" id="5688981at2"/>
<dbReference type="Proteomes" id="UP000000809">
    <property type="component" value="Chromosome"/>
</dbReference>
<gene>
    <name type="ordered locus">PM0294</name>
</gene>
<organism>
    <name type="scientific">Pasteurella multocida (strain Pm70)</name>
    <dbReference type="NCBI Taxonomy" id="272843"/>
    <lineage>
        <taxon>Bacteria</taxon>
        <taxon>Pseudomonadati</taxon>
        <taxon>Pseudomonadota</taxon>
        <taxon>Gammaproteobacteria</taxon>
        <taxon>Pasteurellales</taxon>
        <taxon>Pasteurellaceae</taxon>
        <taxon>Pasteurella</taxon>
    </lineage>
</organism>
<keyword id="KW-1185">Reference proteome</keyword>
<proteinExistence type="predicted"/>
<feature type="chain" id="PRO_0000216289" description="Uncharacterized protein PM0294">
    <location>
        <begin position="1"/>
        <end position="423"/>
    </location>
</feature>
<reference key="1">
    <citation type="journal article" date="2001" name="Proc. Natl. Acad. Sci. U.S.A.">
        <title>Complete genomic sequence of Pasteurella multocida Pm70.</title>
        <authorList>
            <person name="May B.J."/>
            <person name="Zhang Q."/>
            <person name="Li L.L."/>
            <person name="Paustian M.L."/>
            <person name="Whittam T.S."/>
            <person name="Kapur V."/>
        </authorList>
    </citation>
    <scope>NUCLEOTIDE SEQUENCE [LARGE SCALE GENOMIC DNA]</scope>
    <source>
        <strain>Pm70</strain>
    </source>
</reference>
<protein>
    <recommendedName>
        <fullName>Uncharacterized protein PM0294</fullName>
    </recommendedName>
</protein>
<sequence>MYGIKIKNVIKLFLLKFLRNKYRYKINIQHHLISIEGKCGEFDLSQLNYVYLVKDPEIRNNRLTLYLNDFFKIGVNYHGFTQMYQTLSSKYGFDDATFFEYLCKKGPFSIQIWRKKQTQNYVILDEAYTDYTQGFEIQSPEKIFIPWGTTYESLFQQTQFKEKGITYGFIFPIRIGRLLLKDVWIKPSVRKDVPILALYTECYHESATEKSYQELTSILSEHKPLIRSYIEDHSDPKLYQSVLRLNTTEFELRYYRHIRDDFDRGYTKFSIRDTTDYLDYVINEPYESQLVITDYLVIEAQNLIKMDYTDNSIVKRRPPKIKEKFRDTQSLIWTDDLNHKIGFTSDDRAIVFDKADIESFTLANIETTRRHNRSSLSICFVDKNKEAITVFLAEHHFLIPYVDKIKTLTQKEVLVLEEYIEDV</sequence>